<organismHost>
    <name type="scientific">Camelus</name>
    <dbReference type="NCBI Taxonomy" id="9836"/>
</organismHost>
<accession>Q8V2W4</accession>
<keyword id="KW-0067">ATP-binding</keyword>
<keyword id="KW-0106">Calcium</keyword>
<keyword id="KW-0244">Early protein</keyword>
<keyword id="KW-0479">Metal-binding</keyword>
<keyword id="KW-0507">mRNA processing</keyword>
<keyword id="KW-0547">Nucleotide-binding</keyword>
<keyword id="KW-0804">Transcription</keyword>
<keyword id="KW-0808">Transferase</keyword>
<name>PAP1_CAMPM</name>
<comment type="function">
    <text evidence="1">Polymerase that creates the 3'-poly(A) tail of mRNA's.</text>
</comment>
<comment type="catalytic activity">
    <reaction evidence="1">
        <text>RNA(n) + ATP = RNA(n)-3'-adenine ribonucleotide + diphosphate</text>
        <dbReference type="Rhea" id="RHEA:11332"/>
        <dbReference type="Rhea" id="RHEA-COMP:14527"/>
        <dbReference type="Rhea" id="RHEA-COMP:17347"/>
        <dbReference type="ChEBI" id="CHEBI:30616"/>
        <dbReference type="ChEBI" id="CHEBI:33019"/>
        <dbReference type="ChEBI" id="CHEBI:140395"/>
        <dbReference type="ChEBI" id="CHEBI:173115"/>
        <dbReference type="EC" id="2.7.7.19"/>
    </reaction>
</comment>
<comment type="subunit">
    <text evidence="1">Heterodimer of a large (catalytic) subunit and a small (regulatory) subunit.</text>
</comment>
<comment type="induction">
    <text evidence="1">Expressed in the early phase of the viral replicative cycle.</text>
</comment>
<comment type="similarity">
    <text evidence="3">Belongs to the poxviridae poly(A) polymerase catalytic subunit family.</text>
</comment>
<organism>
    <name type="scientific">Camelpox virus (strain M-96)</name>
    <dbReference type="NCBI Taxonomy" id="203173"/>
    <lineage>
        <taxon>Viruses</taxon>
        <taxon>Varidnaviria</taxon>
        <taxon>Bamfordvirae</taxon>
        <taxon>Nucleocytoviricota</taxon>
        <taxon>Pokkesviricetes</taxon>
        <taxon>Chitovirales</taxon>
        <taxon>Poxviridae</taxon>
        <taxon>Chordopoxvirinae</taxon>
        <taxon>Orthopoxvirus</taxon>
        <taxon>Camelpox virus</taxon>
    </lineage>
</organism>
<protein>
    <recommendedName>
        <fullName>Poly(A) polymerase catalytic subunit</fullName>
        <ecNumber>2.7.7.19</ecNumber>
    </recommendedName>
    <alternativeName>
        <fullName>Poly(A) polymerase large subunit</fullName>
        <shortName>PAP-L</shortName>
    </alternativeName>
</protein>
<evidence type="ECO:0000250" key="1">
    <source>
        <dbReference type="UniProtKB" id="P23371"/>
    </source>
</evidence>
<evidence type="ECO:0000255" key="2">
    <source>
        <dbReference type="PIRSR" id="PIRSR015693-50"/>
    </source>
</evidence>
<evidence type="ECO:0000305" key="3"/>
<proteinExistence type="inferred from homology"/>
<sequence>MNRNPDHNTLPNITLKIIETYLGRLPSVNEYYMLKLQTRNIQKITVFNKDIFVSLVKKNKKRFFSDVDTSASEIKDRILSYFSKQTQTYNIGKLFTIIELQSVLVTTYTDILGVLTIKAPNVISSKISYNVTSMEELARDMLNSMNVAVIDKAKVMGRHNVSSLVKNVNKLMEEYLRRHNKSCICYGSYSLYLINPNIRYGDIDILQTNSRTFLIDLAFLIKFITGNNIILSKIPYLRNYMVIKDENDNHIIDSFNIRQDTMNVVPKIFIDNIYIVDPTFQLLNMIKMFSQIDRLEDLSKDPEKFNARMATMLEYVRYTHGIVFDGKRNNIPMKCIIDENNRIVTVTTKDYFSFKKCLAYLDENVLSSDILDLNADTSCDFESVTNSVYLIHDNIMYTYFSNTILLSDKGKVHEISARGLCAHILLYQMLTSGEYKQCLSDLLNSMMNRDKIPIYSHTERDKKPGRHGFINIEKDIIVF</sequence>
<dbReference type="EC" id="2.7.7.19"/>
<dbReference type="EMBL" id="AF438165">
    <property type="protein sequence ID" value="AAL73760.1"/>
    <property type="molecule type" value="Genomic_DNA"/>
</dbReference>
<dbReference type="RefSeq" id="NP_570443.1">
    <property type="nucleotide sequence ID" value="NC_003391.1"/>
</dbReference>
<dbReference type="SMR" id="Q8V2W4"/>
<dbReference type="KEGG" id="vg:932623"/>
<dbReference type="Proteomes" id="UP000152221">
    <property type="component" value="Genome"/>
</dbReference>
<dbReference type="GO" id="GO:0005524">
    <property type="term" value="F:ATP binding"/>
    <property type="evidence" value="ECO:0007669"/>
    <property type="project" value="UniProtKB-KW"/>
</dbReference>
<dbReference type="GO" id="GO:0046872">
    <property type="term" value="F:metal ion binding"/>
    <property type="evidence" value="ECO:0007669"/>
    <property type="project" value="UniProtKB-KW"/>
</dbReference>
<dbReference type="GO" id="GO:1990817">
    <property type="term" value="F:poly(A) RNA polymerase activity"/>
    <property type="evidence" value="ECO:0007669"/>
    <property type="project" value="UniProtKB-EC"/>
</dbReference>
<dbReference type="GO" id="GO:0006397">
    <property type="term" value="P:mRNA processing"/>
    <property type="evidence" value="ECO:0007669"/>
    <property type="project" value="UniProtKB-KW"/>
</dbReference>
<dbReference type="CDD" id="cd20919">
    <property type="entry name" value="polyA_pol_Pox"/>
    <property type="match status" value="1"/>
</dbReference>
<dbReference type="Gene3D" id="1.20.1270.320">
    <property type="entry name" value="Poxvirus poly(A) polymerase, N domain"/>
    <property type="match status" value="1"/>
</dbReference>
<dbReference type="Gene3D" id="3.30.460.60">
    <property type="entry name" value="Poxvirus poly(A) polymerase, nucleotidyltransferase domain"/>
    <property type="match status" value="1"/>
</dbReference>
<dbReference type="InterPro" id="IPR004976">
    <property type="entry name" value="PolyA_pol_cat_Poxvir"/>
</dbReference>
<dbReference type="InterPro" id="IPR037265">
    <property type="entry name" value="PolyA_pol_cat_sf"/>
</dbReference>
<dbReference type="InterPro" id="IPR024231">
    <property type="entry name" value="PolyA_pol_nucTrfase_Poxvir"/>
</dbReference>
<dbReference type="InterPro" id="IPR038419">
    <property type="entry name" value="PolyA_pol_nucTrfase_sf_Poxvir"/>
</dbReference>
<dbReference type="InterPro" id="IPR024397">
    <property type="entry name" value="Poxvirus_polyA_pol_cat_C"/>
</dbReference>
<dbReference type="InterPro" id="IPR024398">
    <property type="entry name" value="Poxvirus_polyA_pol_cat_N"/>
</dbReference>
<dbReference type="InterPro" id="IPR038337">
    <property type="entry name" value="Poxvirus_polyA_pol_cat_N_sf"/>
</dbReference>
<dbReference type="Pfam" id="PF03296">
    <property type="entry name" value="Pox_polyA_pol"/>
    <property type="match status" value="1"/>
</dbReference>
<dbReference type="Pfam" id="PF12629">
    <property type="entry name" value="Pox_polyA_pol_C"/>
    <property type="match status" value="1"/>
</dbReference>
<dbReference type="Pfam" id="PF12630">
    <property type="entry name" value="Pox_polyA_pol_N"/>
    <property type="match status" value="1"/>
</dbReference>
<dbReference type="PIRSF" id="PIRSF015693">
    <property type="entry name" value="VAC-48L_nuct"/>
    <property type="match status" value="1"/>
</dbReference>
<dbReference type="SUPFAM" id="SSF160957">
    <property type="entry name" value="Poly(A) polymerase catalytic subunit-like"/>
    <property type="match status" value="1"/>
</dbReference>
<feature type="chain" id="PRO_0000308925" description="Poly(A) polymerase catalytic subunit">
    <location>
        <begin position="1"/>
        <end position="479"/>
    </location>
</feature>
<feature type="active site" evidence="2">
    <location>
        <position position="202"/>
    </location>
</feature>
<feature type="active site" evidence="2">
    <location>
        <position position="204"/>
    </location>
</feature>
<feature type="binding site" evidence="1">
    <location>
        <position position="202"/>
    </location>
    <ligand>
        <name>Ca(2+)</name>
        <dbReference type="ChEBI" id="CHEBI:29108"/>
        <label>1</label>
    </ligand>
</feature>
<feature type="binding site" evidence="1">
    <location>
        <position position="202"/>
    </location>
    <ligand>
        <name>Ca(2+)</name>
        <dbReference type="ChEBI" id="CHEBI:29108"/>
        <label>2</label>
    </ligand>
</feature>
<feature type="binding site" evidence="1">
    <location>
        <position position="204"/>
    </location>
    <ligand>
        <name>Ca(2+)</name>
        <dbReference type="ChEBI" id="CHEBI:29108"/>
        <label>1</label>
    </ligand>
</feature>
<feature type="binding site" evidence="1">
    <location>
        <position position="204"/>
    </location>
    <ligand>
        <name>Ca(2+)</name>
        <dbReference type="ChEBI" id="CHEBI:29108"/>
        <label>2</label>
    </ligand>
</feature>
<feature type="binding site" evidence="1">
    <location>
        <position position="253"/>
    </location>
    <ligand>
        <name>Ca(2+)</name>
        <dbReference type="ChEBI" id="CHEBI:29108"/>
        <label>2</label>
    </ligand>
</feature>
<reference key="1">
    <citation type="journal article" date="2002" name="Virology">
        <title>The genome of camelpox virus.</title>
        <authorList>
            <person name="Afonso C.L."/>
            <person name="Tulman E.R."/>
            <person name="Lu Z."/>
            <person name="Zsak L."/>
            <person name="Sandybaev N.T."/>
            <person name="Kerembekova U.Z."/>
            <person name="Zaitsev V.L."/>
            <person name="Kutish G.F."/>
            <person name="Rock D.L."/>
        </authorList>
    </citation>
    <scope>NUCLEOTIDE SEQUENCE [LARGE SCALE GENOMIC DNA]</scope>
</reference>
<gene>
    <name type="primary">OPG063</name>
    <name type="synonym">PAPL</name>
    <name type="ordered locus">CMLV053</name>
</gene>